<name>ARID1_ARATH</name>
<sequence length="562" mass="63315">MAGWSMVADEDAVDYSKTPKSLDANRSPESVNPESTGFEKKIKELISLFRPLLDSFLAEFCSADGFLPLPAMTGEGRTVDLFNLFLNVTHKGGFDAVSENGSWDEVVQESGLESYDSASAKLIYVKYLDAFGRWLNRVVAGDTDVSSVELSGISDALVARLNGFLSEVKKKYELRKGRPAKELGAELKWFISKTKRRYDKHHVGKESASNDAVKEFQGSKLAERRLEQIMILESVTQECSSPGKRKRECPLETLKWLSDVAKDPCDPSLGIVPDRSEWVSYGSEEPWKQLLLFRASRTNNDSACEKTWQKVQKMHPCLYDDSAGASYNLRERLSYEDYKRGKTGNGSDIGSSDEEDRPCALVGSKFQAKVPEWTGITPESDSKWLGTRIWPLTKEQTKANLLIERDRIGKGRQDPCGCHNPGSIECVKFHITAKRDKLKLELGPAFYMWCFDVMGECTLQYWTDLELKKIKSLMSSPPSLSPAFIHQAKMILPSKSRGKIVSYFYNVTLLQYRASQSRITPHDIDSDTDQIFLRATENENPAPEANTFQKPALLSPNKKRCR</sequence>
<keyword id="KW-0238">DNA-binding</keyword>
<keyword id="KW-0539">Nucleus</keyword>
<keyword id="KW-1185">Reference proteome</keyword>
<keyword id="KW-0678">Repressor</keyword>
<keyword id="KW-0804">Transcription</keyword>
<keyword id="KW-0805">Transcription regulation</keyword>
<protein>
    <recommendedName>
        <fullName>AT-rich interactive domain-containing protein 1</fullName>
        <shortName>ARID domain-containing protein 1</shortName>
    </recommendedName>
    <alternativeName>
        <fullName>ARID and ELM2 domain-containing protein 1</fullName>
    </alternativeName>
</protein>
<dbReference type="EMBL" id="AC005397">
    <property type="protein sequence ID" value="AAC62899.1"/>
    <property type="status" value="ALT_INIT"/>
    <property type="molecule type" value="Genomic_DNA"/>
</dbReference>
<dbReference type="EMBL" id="CP002685">
    <property type="protein sequence ID" value="AEC10635.1"/>
    <property type="molecule type" value="Genomic_DNA"/>
</dbReference>
<dbReference type="EMBL" id="CP002685">
    <property type="protein sequence ID" value="ANM61620.1"/>
    <property type="molecule type" value="Genomic_DNA"/>
</dbReference>
<dbReference type="EMBL" id="BT003984">
    <property type="protein sequence ID" value="AAO42024.1"/>
    <property type="molecule type" value="mRNA"/>
</dbReference>
<dbReference type="EMBL" id="BT005067">
    <property type="protein sequence ID" value="AAO50600.1"/>
    <property type="molecule type" value="mRNA"/>
</dbReference>
<dbReference type="PIR" id="A84898">
    <property type="entry name" value="A84898"/>
</dbReference>
<dbReference type="RefSeq" id="NP_001318434.1">
    <property type="nucleotide sequence ID" value="NM_001337174.1"/>
</dbReference>
<dbReference type="RefSeq" id="NP_001323826.1">
    <property type="nucleotide sequence ID" value="NM_001337175.1"/>
</dbReference>
<dbReference type="RefSeq" id="NP_182128.2">
    <property type="nucleotide sequence ID" value="NM_130167.2"/>
</dbReference>
<dbReference type="BioGRID" id="4547">
    <property type="interactions" value="3"/>
</dbReference>
<dbReference type="FunCoup" id="Q84JT7">
    <property type="interactions" value="87"/>
</dbReference>
<dbReference type="IntAct" id="Q84JT7">
    <property type="interactions" value="1"/>
</dbReference>
<dbReference type="STRING" id="3702.Q84JT7"/>
<dbReference type="iPTMnet" id="Q84JT7"/>
<dbReference type="PaxDb" id="3702-AT2G46040.1"/>
<dbReference type="ProteomicsDB" id="246600"/>
<dbReference type="EnsemblPlants" id="AT2G46040.1">
    <property type="protein sequence ID" value="AT2G46040.1"/>
    <property type="gene ID" value="AT2G46040"/>
</dbReference>
<dbReference type="EnsemblPlants" id="AT2G46040.3">
    <property type="protein sequence ID" value="AT2G46040.3"/>
    <property type="gene ID" value="AT2G46040"/>
</dbReference>
<dbReference type="GeneID" id="819212"/>
<dbReference type="Gramene" id="AT2G46040.1">
    <property type="protein sequence ID" value="AT2G46040.1"/>
    <property type="gene ID" value="AT2G46040"/>
</dbReference>
<dbReference type="Gramene" id="AT2G46040.3">
    <property type="protein sequence ID" value="AT2G46040.3"/>
    <property type="gene ID" value="AT2G46040"/>
</dbReference>
<dbReference type="KEGG" id="ath:AT2G46040"/>
<dbReference type="Araport" id="AT2G46040"/>
<dbReference type="TAIR" id="AT2G46040">
    <property type="gene designation" value="ARID1"/>
</dbReference>
<dbReference type="eggNOG" id="ENOG502QVAG">
    <property type="taxonomic scope" value="Eukaryota"/>
</dbReference>
<dbReference type="HOGENOM" id="CLU_032356_2_0_1"/>
<dbReference type="InParanoid" id="Q84JT7"/>
<dbReference type="OrthoDB" id="1938591at2759"/>
<dbReference type="PhylomeDB" id="Q84JT7"/>
<dbReference type="PRO" id="PR:Q84JT7"/>
<dbReference type="Proteomes" id="UP000006548">
    <property type="component" value="Chromosome 2"/>
</dbReference>
<dbReference type="ExpressionAtlas" id="Q84JT7">
    <property type="expression patterns" value="baseline and differential"/>
</dbReference>
<dbReference type="GO" id="GO:0048555">
    <property type="term" value="C:generative cell nucleus"/>
    <property type="evidence" value="ECO:0000314"/>
    <property type="project" value="TAIR"/>
</dbReference>
<dbReference type="GO" id="GO:0000118">
    <property type="term" value="C:histone deacetylase complex"/>
    <property type="evidence" value="ECO:0000314"/>
    <property type="project" value="TAIR"/>
</dbReference>
<dbReference type="GO" id="GO:0048556">
    <property type="term" value="C:microsporocyte nucleus"/>
    <property type="evidence" value="ECO:0000314"/>
    <property type="project" value="TAIR"/>
</dbReference>
<dbReference type="GO" id="GO:0003677">
    <property type="term" value="F:DNA binding"/>
    <property type="evidence" value="ECO:0007669"/>
    <property type="project" value="UniProtKB-KW"/>
</dbReference>
<dbReference type="GO" id="GO:0048235">
    <property type="term" value="P:pollen sperm cell differentiation"/>
    <property type="evidence" value="ECO:0000315"/>
    <property type="project" value="TAIR"/>
</dbReference>
<dbReference type="GO" id="GO:0010628">
    <property type="term" value="P:positive regulation of gene expression"/>
    <property type="evidence" value="ECO:0000353"/>
    <property type="project" value="TAIR"/>
</dbReference>
<dbReference type="CDD" id="cd16100">
    <property type="entry name" value="ARID"/>
    <property type="match status" value="1"/>
</dbReference>
<dbReference type="Gene3D" id="1.10.150.60">
    <property type="entry name" value="ARID DNA-binding domain"/>
    <property type="match status" value="1"/>
</dbReference>
<dbReference type="InterPro" id="IPR001606">
    <property type="entry name" value="ARID_dom"/>
</dbReference>
<dbReference type="InterPro" id="IPR036431">
    <property type="entry name" value="ARID_dom_sf"/>
</dbReference>
<dbReference type="InterPro" id="IPR000949">
    <property type="entry name" value="ELM2_dom"/>
</dbReference>
<dbReference type="PANTHER" id="PTHR46410:SF1">
    <property type="entry name" value="AT-RICH INTERACTIVE DOMAIN-CONTAINING PROTEIN 1"/>
    <property type="match status" value="1"/>
</dbReference>
<dbReference type="PANTHER" id="PTHR46410">
    <property type="entry name" value="AT-RICH INTERACTIVE DOMAIN-CONTAINING PROTEIN 2"/>
    <property type="match status" value="1"/>
</dbReference>
<dbReference type="Pfam" id="PF01388">
    <property type="entry name" value="ARID"/>
    <property type="match status" value="1"/>
</dbReference>
<dbReference type="SMART" id="SM01014">
    <property type="entry name" value="ARID"/>
    <property type="match status" value="1"/>
</dbReference>
<dbReference type="SMART" id="SM00501">
    <property type="entry name" value="BRIGHT"/>
    <property type="match status" value="1"/>
</dbReference>
<dbReference type="SMART" id="SM01189">
    <property type="entry name" value="ELM2"/>
    <property type="match status" value="1"/>
</dbReference>
<dbReference type="SUPFAM" id="SSF46774">
    <property type="entry name" value="ARID-like"/>
    <property type="match status" value="1"/>
</dbReference>
<dbReference type="PROSITE" id="PS51011">
    <property type="entry name" value="ARID"/>
    <property type="match status" value="1"/>
</dbReference>
<dbReference type="PROSITE" id="PS51156">
    <property type="entry name" value="ELM2"/>
    <property type="match status" value="1"/>
</dbReference>
<accession>Q84JT7</accession>
<accession>O82364</accession>
<evidence type="ECO:0000255" key="1">
    <source>
        <dbReference type="PROSITE-ProRule" id="PRU00355"/>
    </source>
</evidence>
<evidence type="ECO:0000255" key="2">
    <source>
        <dbReference type="PROSITE-ProRule" id="PRU00512"/>
    </source>
</evidence>
<evidence type="ECO:0000305" key="3"/>
<proteinExistence type="evidence at transcript level"/>
<comment type="subcellular location">
    <subcellularLocation>
        <location evidence="1 2">Nucleus</location>
    </subcellularLocation>
</comment>
<comment type="sequence caution" evidence="3">
    <conflict type="erroneous initiation">
        <sequence resource="EMBL-CDS" id="AAC62899"/>
    </conflict>
    <text>Extended N-terminus.</text>
</comment>
<organism>
    <name type="scientific">Arabidopsis thaliana</name>
    <name type="common">Mouse-ear cress</name>
    <dbReference type="NCBI Taxonomy" id="3702"/>
    <lineage>
        <taxon>Eukaryota</taxon>
        <taxon>Viridiplantae</taxon>
        <taxon>Streptophyta</taxon>
        <taxon>Embryophyta</taxon>
        <taxon>Tracheophyta</taxon>
        <taxon>Spermatophyta</taxon>
        <taxon>Magnoliopsida</taxon>
        <taxon>eudicotyledons</taxon>
        <taxon>Gunneridae</taxon>
        <taxon>Pentapetalae</taxon>
        <taxon>rosids</taxon>
        <taxon>malvids</taxon>
        <taxon>Brassicales</taxon>
        <taxon>Brassicaceae</taxon>
        <taxon>Camelineae</taxon>
        <taxon>Arabidopsis</taxon>
    </lineage>
</organism>
<feature type="chain" id="PRO_0000413209" description="AT-rich interactive domain-containing protein 1">
    <location>
        <begin position="1"/>
        <end position="562"/>
    </location>
</feature>
<feature type="domain" description="ARID" evidence="1">
    <location>
        <begin position="43"/>
        <end position="136"/>
    </location>
</feature>
<feature type="domain" description="ELM2" evidence="2">
    <location>
        <begin position="358"/>
        <end position="448"/>
    </location>
</feature>
<gene>
    <name type="primary">ARID1</name>
    <name type="ordered locus">At2g46040</name>
    <name type="ORF">T3F17.31</name>
</gene>
<reference key="1">
    <citation type="journal article" date="1999" name="Nature">
        <title>Sequence and analysis of chromosome 2 of the plant Arabidopsis thaliana.</title>
        <authorList>
            <person name="Lin X."/>
            <person name="Kaul S."/>
            <person name="Rounsley S.D."/>
            <person name="Shea T.P."/>
            <person name="Benito M.-I."/>
            <person name="Town C.D."/>
            <person name="Fujii C.Y."/>
            <person name="Mason T.M."/>
            <person name="Bowman C.L."/>
            <person name="Barnstead M.E."/>
            <person name="Feldblyum T.V."/>
            <person name="Buell C.R."/>
            <person name="Ketchum K.A."/>
            <person name="Lee J.J."/>
            <person name="Ronning C.M."/>
            <person name="Koo H.L."/>
            <person name="Moffat K.S."/>
            <person name="Cronin L.A."/>
            <person name="Shen M."/>
            <person name="Pai G."/>
            <person name="Van Aken S."/>
            <person name="Umayam L."/>
            <person name="Tallon L.J."/>
            <person name="Gill J.E."/>
            <person name="Adams M.D."/>
            <person name="Carrera A.J."/>
            <person name="Creasy T.H."/>
            <person name="Goodman H.M."/>
            <person name="Somerville C.R."/>
            <person name="Copenhaver G.P."/>
            <person name="Preuss D."/>
            <person name="Nierman W.C."/>
            <person name="White O."/>
            <person name="Eisen J.A."/>
            <person name="Salzberg S.L."/>
            <person name="Fraser C.M."/>
            <person name="Venter J.C."/>
        </authorList>
    </citation>
    <scope>NUCLEOTIDE SEQUENCE [LARGE SCALE GENOMIC DNA]</scope>
    <source>
        <strain>cv. Columbia</strain>
    </source>
</reference>
<reference key="2">
    <citation type="journal article" date="2017" name="Plant J.">
        <title>Araport11: a complete reannotation of the Arabidopsis thaliana reference genome.</title>
        <authorList>
            <person name="Cheng C.Y."/>
            <person name="Krishnakumar V."/>
            <person name="Chan A.P."/>
            <person name="Thibaud-Nissen F."/>
            <person name="Schobel S."/>
            <person name="Town C.D."/>
        </authorList>
    </citation>
    <scope>GENOME REANNOTATION</scope>
    <source>
        <strain>cv. Columbia</strain>
    </source>
</reference>
<reference key="3">
    <citation type="journal article" date="2003" name="Science">
        <title>Empirical analysis of transcriptional activity in the Arabidopsis genome.</title>
        <authorList>
            <person name="Yamada K."/>
            <person name="Lim J."/>
            <person name="Dale J.M."/>
            <person name="Chen H."/>
            <person name="Shinn P."/>
            <person name="Palm C.J."/>
            <person name="Southwick A.M."/>
            <person name="Wu H.C."/>
            <person name="Kim C.J."/>
            <person name="Nguyen M."/>
            <person name="Pham P.K."/>
            <person name="Cheuk R.F."/>
            <person name="Karlin-Newmann G."/>
            <person name="Liu S.X."/>
            <person name="Lam B."/>
            <person name="Sakano H."/>
            <person name="Wu T."/>
            <person name="Yu G."/>
            <person name="Miranda M."/>
            <person name="Quach H.L."/>
            <person name="Tripp M."/>
            <person name="Chang C.H."/>
            <person name="Lee J.M."/>
            <person name="Toriumi M.J."/>
            <person name="Chan M.M."/>
            <person name="Tang C.C."/>
            <person name="Onodera C.S."/>
            <person name="Deng J.M."/>
            <person name="Akiyama K."/>
            <person name="Ansari Y."/>
            <person name="Arakawa T."/>
            <person name="Banh J."/>
            <person name="Banno F."/>
            <person name="Bowser L."/>
            <person name="Brooks S.Y."/>
            <person name="Carninci P."/>
            <person name="Chao Q."/>
            <person name="Choy N."/>
            <person name="Enju A."/>
            <person name="Goldsmith A.D."/>
            <person name="Gurjal M."/>
            <person name="Hansen N.F."/>
            <person name="Hayashizaki Y."/>
            <person name="Johnson-Hopson C."/>
            <person name="Hsuan V.W."/>
            <person name="Iida K."/>
            <person name="Karnes M."/>
            <person name="Khan S."/>
            <person name="Koesema E."/>
            <person name="Ishida J."/>
            <person name="Jiang P.X."/>
            <person name="Jones T."/>
            <person name="Kawai J."/>
            <person name="Kamiya A."/>
            <person name="Meyers C."/>
            <person name="Nakajima M."/>
            <person name="Narusaka M."/>
            <person name="Seki M."/>
            <person name="Sakurai T."/>
            <person name="Satou M."/>
            <person name="Tamse R."/>
            <person name="Vaysberg M."/>
            <person name="Wallender E.K."/>
            <person name="Wong C."/>
            <person name="Yamamura Y."/>
            <person name="Yuan S."/>
            <person name="Shinozaki K."/>
            <person name="Davis R.W."/>
            <person name="Theologis A."/>
            <person name="Ecker J.R."/>
        </authorList>
    </citation>
    <scope>NUCLEOTIDE SEQUENCE [LARGE SCALE MRNA]</scope>
    <source>
        <strain>cv. Columbia</strain>
    </source>
</reference>